<name>Y1302_STAA3</name>
<sequence>MALKHYKNSDSTVFNDAKALFDLNKNILLKGPTGSGKTKLAETLSEVVDTPMHQVNCSVDLDTESLLGFKTIKTNAEGQQEIVFVDGPVIKAMKEGHILYIDEINMAKPETLPVLNGVLDYRRQITNPYTGEVIKAVPGFNVIAAINEGYVGTLPMNEALKNRFVVIHVDYIDGDILKNVIKEQSLLQGDKQIEQIIKFNEDLRTMSKQGQISEEAASIRALLDLCDLITVMPVERAIKRTIIDKLEDEREQQAIYNAVELNF</sequence>
<evidence type="ECO:0000255" key="1"/>
<evidence type="ECO:0000305" key="2"/>
<feature type="chain" id="PRO_0000284813" description="Uncharacterized protein SAUSA300_1302">
    <location>
        <begin position="1"/>
        <end position="263"/>
    </location>
</feature>
<feature type="binding site" evidence="1">
    <location>
        <begin position="31"/>
        <end position="38"/>
    </location>
    <ligand>
        <name>ATP</name>
        <dbReference type="ChEBI" id="CHEBI:30616"/>
    </ligand>
</feature>
<gene>
    <name type="ordered locus">SAUSA300_1302</name>
</gene>
<keyword id="KW-0067">ATP-binding</keyword>
<keyword id="KW-0547">Nucleotide-binding</keyword>
<reference key="1">
    <citation type="journal article" date="2006" name="Lancet">
        <title>Complete genome sequence of USA300, an epidemic clone of community-acquired meticillin-resistant Staphylococcus aureus.</title>
        <authorList>
            <person name="Diep B.A."/>
            <person name="Gill S.R."/>
            <person name="Chang R.F."/>
            <person name="Phan T.H."/>
            <person name="Chen J.H."/>
            <person name="Davidson M.G."/>
            <person name="Lin F."/>
            <person name="Lin J."/>
            <person name="Carleton H.A."/>
            <person name="Mongodin E.F."/>
            <person name="Sensabaugh G.F."/>
            <person name="Perdreau-Remington F."/>
        </authorList>
    </citation>
    <scope>NUCLEOTIDE SEQUENCE [LARGE SCALE GENOMIC DNA]</scope>
    <source>
        <strain>USA300</strain>
    </source>
</reference>
<protein>
    <recommendedName>
        <fullName>Uncharacterized protein SAUSA300_1302</fullName>
    </recommendedName>
</protein>
<comment type="similarity">
    <text evidence="2">Belongs to the CbbQ/NirQ/NorQ/GpvN family.</text>
</comment>
<organism>
    <name type="scientific">Staphylococcus aureus (strain USA300)</name>
    <dbReference type="NCBI Taxonomy" id="367830"/>
    <lineage>
        <taxon>Bacteria</taxon>
        <taxon>Bacillati</taxon>
        <taxon>Bacillota</taxon>
        <taxon>Bacilli</taxon>
        <taxon>Bacillales</taxon>
        <taxon>Staphylococcaceae</taxon>
        <taxon>Staphylococcus</taxon>
    </lineage>
</organism>
<accession>Q2FH29</accession>
<proteinExistence type="inferred from homology"/>
<dbReference type="EMBL" id="CP000255">
    <property type="protein sequence ID" value="ABD21307.1"/>
    <property type="molecule type" value="Genomic_DNA"/>
</dbReference>
<dbReference type="RefSeq" id="WP_001185424.1">
    <property type="nucleotide sequence ID" value="NZ_CP027476.1"/>
</dbReference>
<dbReference type="SMR" id="Q2FH29"/>
<dbReference type="KEGG" id="saa:SAUSA300_1302"/>
<dbReference type="HOGENOM" id="CLU_080347_0_0_9"/>
<dbReference type="OMA" id="QAMTKGH"/>
<dbReference type="Proteomes" id="UP000001939">
    <property type="component" value="Chromosome"/>
</dbReference>
<dbReference type="GO" id="GO:0005524">
    <property type="term" value="F:ATP binding"/>
    <property type="evidence" value="ECO:0007669"/>
    <property type="project" value="UniProtKB-KW"/>
</dbReference>
<dbReference type="GO" id="GO:0016887">
    <property type="term" value="F:ATP hydrolysis activity"/>
    <property type="evidence" value="ECO:0007669"/>
    <property type="project" value="InterPro"/>
</dbReference>
<dbReference type="CDD" id="cd00009">
    <property type="entry name" value="AAA"/>
    <property type="match status" value="1"/>
</dbReference>
<dbReference type="Gene3D" id="3.40.50.300">
    <property type="entry name" value="P-loop containing nucleotide triphosphate hydrolases"/>
    <property type="match status" value="1"/>
</dbReference>
<dbReference type="InterPro" id="IPR011704">
    <property type="entry name" value="ATPase_dyneun-rel_AAA"/>
</dbReference>
<dbReference type="InterPro" id="IPR050764">
    <property type="entry name" value="CbbQ/NirQ/NorQ/GpvN"/>
</dbReference>
<dbReference type="InterPro" id="IPR013615">
    <property type="entry name" value="CbbQ_C"/>
</dbReference>
<dbReference type="InterPro" id="IPR001270">
    <property type="entry name" value="ClpA/B"/>
</dbReference>
<dbReference type="InterPro" id="IPR027417">
    <property type="entry name" value="P-loop_NTPase"/>
</dbReference>
<dbReference type="PANTHER" id="PTHR42759:SF1">
    <property type="entry name" value="MAGNESIUM-CHELATASE SUBUNIT CHLD"/>
    <property type="match status" value="1"/>
</dbReference>
<dbReference type="PANTHER" id="PTHR42759">
    <property type="entry name" value="MOXR FAMILY PROTEIN"/>
    <property type="match status" value="1"/>
</dbReference>
<dbReference type="Pfam" id="PF07728">
    <property type="entry name" value="AAA_5"/>
    <property type="match status" value="1"/>
</dbReference>
<dbReference type="Pfam" id="PF08406">
    <property type="entry name" value="CbbQ_C"/>
    <property type="match status" value="1"/>
</dbReference>
<dbReference type="PRINTS" id="PR00300">
    <property type="entry name" value="CLPPROTEASEA"/>
</dbReference>
<dbReference type="SUPFAM" id="SSF52540">
    <property type="entry name" value="P-loop containing nucleoside triphosphate hydrolases"/>
    <property type="match status" value="1"/>
</dbReference>